<proteinExistence type="inferred from homology"/>
<reference key="1">
    <citation type="journal article" date="2009" name="PLoS Genet.">
        <title>Organised genome dynamics in the Escherichia coli species results in highly diverse adaptive paths.</title>
        <authorList>
            <person name="Touchon M."/>
            <person name="Hoede C."/>
            <person name="Tenaillon O."/>
            <person name="Barbe V."/>
            <person name="Baeriswyl S."/>
            <person name="Bidet P."/>
            <person name="Bingen E."/>
            <person name="Bonacorsi S."/>
            <person name="Bouchier C."/>
            <person name="Bouvet O."/>
            <person name="Calteau A."/>
            <person name="Chiapello H."/>
            <person name="Clermont O."/>
            <person name="Cruveiller S."/>
            <person name="Danchin A."/>
            <person name="Diard M."/>
            <person name="Dossat C."/>
            <person name="Karoui M.E."/>
            <person name="Frapy E."/>
            <person name="Garry L."/>
            <person name="Ghigo J.M."/>
            <person name="Gilles A.M."/>
            <person name="Johnson J."/>
            <person name="Le Bouguenec C."/>
            <person name="Lescat M."/>
            <person name="Mangenot S."/>
            <person name="Martinez-Jehanne V."/>
            <person name="Matic I."/>
            <person name="Nassif X."/>
            <person name="Oztas S."/>
            <person name="Petit M.A."/>
            <person name="Pichon C."/>
            <person name="Rouy Z."/>
            <person name="Ruf C.S."/>
            <person name="Schneider D."/>
            <person name="Tourret J."/>
            <person name="Vacherie B."/>
            <person name="Vallenet D."/>
            <person name="Medigue C."/>
            <person name="Rocha E.P.C."/>
            <person name="Denamur E."/>
        </authorList>
    </citation>
    <scope>NUCLEOTIDE SEQUENCE [LARGE SCALE GENOMIC DNA]</scope>
    <source>
        <strain>55989 / EAEC</strain>
    </source>
</reference>
<dbReference type="EC" id="3.5.-.-" evidence="1"/>
<dbReference type="EMBL" id="CU928145">
    <property type="protein sequence ID" value="CAU96982.1"/>
    <property type="molecule type" value="Genomic_DNA"/>
</dbReference>
<dbReference type="RefSeq" id="WP_001126777.1">
    <property type="nucleotide sequence ID" value="NC_011748.1"/>
</dbReference>
<dbReference type="SMR" id="B7LFC0"/>
<dbReference type="KEGG" id="eck:EC55989_1121"/>
<dbReference type="HOGENOM" id="CLU_100715_7_3_6"/>
<dbReference type="Proteomes" id="UP000000746">
    <property type="component" value="Chromosome"/>
</dbReference>
<dbReference type="GO" id="GO:0005829">
    <property type="term" value="C:cytosol"/>
    <property type="evidence" value="ECO:0007669"/>
    <property type="project" value="TreeGrafter"/>
</dbReference>
<dbReference type="GO" id="GO:0019239">
    <property type="term" value="F:deaminase activity"/>
    <property type="evidence" value="ECO:0007669"/>
    <property type="project" value="TreeGrafter"/>
</dbReference>
<dbReference type="GO" id="GO:0019740">
    <property type="term" value="P:nitrogen utilization"/>
    <property type="evidence" value="ECO:0007669"/>
    <property type="project" value="UniProtKB-UniRule"/>
</dbReference>
<dbReference type="GO" id="GO:0006212">
    <property type="term" value="P:uracil catabolic process"/>
    <property type="evidence" value="ECO:0007669"/>
    <property type="project" value="UniProtKB-UniRule"/>
</dbReference>
<dbReference type="CDD" id="cd00448">
    <property type="entry name" value="YjgF_YER057c_UK114_family"/>
    <property type="match status" value="1"/>
</dbReference>
<dbReference type="FunFam" id="3.30.1330.40:FF:000003">
    <property type="entry name" value="Putative aminoacrylate peracid reductase RutC"/>
    <property type="match status" value="1"/>
</dbReference>
<dbReference type="Gene3D" id="3.30.1330.40">
    <property type="entry name" value="RutC-like"/>
    <property type="match status" value="1"/>
</dbReference>
<dbReference type="HAMAP" id="MF_00831">
    <property type="entry name" value="RutC"/>
    <property type="match status" value="1"/>
</dbReference>
<dbReference type="InterPro" id="IPR019897">
    <property type="entry name" value="RidA_CS"/>
</dbReference>
<dbReference type="InterPro" id="IPR019898">
    <property type="entry name" value="RutC"/>
</dbReference>
<dbReference type="InterPro" id="IPR035959">
    <property type="entry name" value="RutC-like_sf"/>
</dbReference>
<dbReference type="InterPro" id="IPR006175">
    <property type="entry name" value="YjgF/YER057c/UK114"/>
</dbReference>
<dbReference type="NCBIfam" id="TIGR03610">
    <property type="entry name" value="RutC"/>
    <property type="match status" value="1"/>
</dbReference>
<dbReference type="PANTHER" id="PTHR11803">
    <property type="entry name" value="2-IMINOBUTANOATE/2-IMINOPROPANOATE DEAMINASE RIDA"/>
    <property type="match status" value="1"/>
</dbReference>
<dbReference type="PANTHER" id="PTHR11803:SF58">
    <property type="entry name" value="PROTEIN HMF1-RELATED"/>
    <property type="match status" value="1"/>
</dbReference>
<dbReference type="Pfam" id="PF01042">
    <property type="entry name" value="Ribonuc_L-PSP"/>
    <property type="match status" value="1"/>
</dbReference>
<dbReference type="SUPFAM" id="SSF55298">
    <property type="entry name" value="YjgF-like"/>
    <property type="match status" value="1"/>
</dbReference>
<dbReference type="PROSITE" id="PS01094">
    <property type="entry name" value="UPF0076"/>
    <property type="match status" value="1"/>
</dbReference>
<name>RUTC_ECO55</name>
<gene>
    <name evidence="1" type="primary">rutC</name>
    <name type="ordered locus">EC55989_1121</name>
</gene>
<protein>
    <recommendedName>
        <fullName evidence="1">3-aminoacrylate deaminase RutC</fullName>
        <shortName evidence="1">3-AA deaminase</shortName>
        <ecNumber evidence="1">3.5.-.-</ecNumber>
    </recommendedName>
</protein>
<accession>B7LFC0</accession>
<sequence>MPKSVIIPAGSSAPLAPFVPGTLADGVVYVSGTLAFDQHNNVLFADDPKAQTRHVLEIIRKVIETAGGTMADVTFNSIFITDWKNYAAINEIYAEFFPGDKPARFCIQCGLVKPDALVEIATIAHIAK</sequence>
<organism>
    <name type="scientific">Escherichia coli (strain 55989 / EAEC)</name>
    <dbReference type="NCBI Taxonomy" id="585055"/>
    <lineage>
        <taxon>Bacteria</taxon>
        <taxon>Pseudomonadati</taxon>
        <taxon>Pseudomonadota</taxon>
        <taxon>Gammaproteobacteria</taxon>
        <taxon>Enterobacterales</taxon>
        <taxon>Enterobacteriaceae</taxon>
        <taxon>Escherichia</taxon>
    </lineage>
</organism>
<comment type="function">
    <text evidence="1">Involved in pyrimidine catabolism. Catalyzes the deamination of 3-aminoacrylate to malonic semialdehyde, a reaction that can also occur spontaneously. RutC may facilitate the reaction and modulate the metabolic fitness, rather than catalyzing essential functions.</text>
</comment>
<comment type="catalytic activity">
    <reaction evidence="1">
        <text>(Z)-3-aminoacrylate + H2O + H(+) = 3-oxopropanoate + NH4(+)</text>
        <dbReference type="Rhea" id="RHEA:34947"/>
        <dbReference type="ChEBI" id="CHEBI:15377"/>
        <dbReference type="ChEBI" id="CHEBI:15378"/>
        <dbReference type="ChEBI" id="CHEBI:28938"/>
        <dbReference type="ChEBI" id="CHEBI:33190"/>
        <dbReference type="ChEBI" id="CHEBI:59894"/>
    </reaction>
</comment>
<comment type="subunit">
    <text evidence="1">Homotrimer.</text>
</comment>
<comment type="similarity">
    <text evidence="1">Belongs to the RutC family.</text>
</comment>
<keyword id="KW-0378">Hydrolase</keyword>
<keyword id="KW-1185">Reference proteome</keyword>
<feature type="chain" id="PRO_0000402721" description="3-aminoacrylate deaminase RutC">
    <location>
        <begin position="1"/>
        <end position="128"/>
    </location>
</feature>
<evidence type="ECO:0000255" key="1">
    <source>
        <dbReference type="HAMAP-Rule" id="MF_00831"/>
    </source>
</evidence>